<name>GORS2_RAT</name>
<keyword id="KW-0002">3D-structure</keyword>
<keyword id="KW-0221">Differentiation</keyword>
<keyword id="KW-0256">Endoplasmic reticulum</keyword>
<keyword id="KW-0333">Golgi apparatus</keyword>
<keyword id="KW-0449">Lipoprotein</keyword>
<keyword id="KW-0472">Membrane</keyword>
<keyword id="KW-0488">Methylation</keyword>
<keyword id="KW-0519">Myristate</keyword>
<keyword id="KW-0564">Palmitate</keyword>
<keyword id="KW-0597">Phosphoprotein</keyword>
<keyword id="KW-1185">Reference proteome</keyword>
<keyword id="KW-0677">Repeat</keyword>
<keyword id="KW-0744">Spermatogenesis</keyword>
<proteinExistence type="evidence at protein level"/>
<protein>
    <recommendedName>
        <fullName>Golgi reassembly-stacking protein 2</fullName>
        <shortName>GRS2</shortName>
    </recommendedName>
    <alternativeName>
        <fullName>Golgi reassembly-stacking protein of 55 kDa</fullName>
        <shortName>GRASP55</shortName>
    </alternativeName>
</protein>
<evidence type="ECO:0000250" key="1"/>
<evidence type="ECO:0000250" key="2">
    <source>
        <dbReference type="UniProtKB" id="Q99JX3"/>
    </source>
</evidence>
<evidence type="ECO:0000250" key="3">
    <source>
        <dbReference type="UniProtKB" id="Q9H8Y8"/>
    </source>
</evidence>
<evidence type="ECO:0000255" key="4">
    <source>
        <dbReference type="PROSITE-ProRule" id="PRU01212"/>
    </source>
</evidence>
<evidence type="ECO:0000255" key="5">
    <source>
        <dbReference type="PROSITE-ProRule" id="PRU01214"/>
    </source>
</evidence>
<evidence type="ECO:0000256" key="6">
    <source>
        <dbReference type="SAM" id="MobiDB-lite"/>
    </source>
</evidence>
<evidence type="ECO:0000269" key="7">
    <source>
    </source>
</evidence>
<evidence type="ECO:0000269" key="8">
    <source>
    </source>
</evidence>
<evidence type="ECO:0000269" key="9">
    <source>
    </source>
</evidence>
<evidence type="ECO:0000269" key="10">
    <source>
    </source>
</evidence>
<evidence type="ECO:0000269" key="11">
    <source>
    </source>
</evidence>
<evidence type="ECO:0000305" key="12"/>
<evidence type="ECO:0007744" key="13">
    <source>
        <dbReference type="PDB" id="4KFW"/>
    </source>
</evidence>
<evidence type="ECO:0007829" key="14">
    <source>
        <dbReference type="PDB" id="4KFW"/>
    </source>
</evidence>
<dbReference type="EMBL" id="AF110267">
    <property type="protein sequence ID" value="AAD55350.1"/>
    <property type="molecule type" value="mRNA"/>
</dbReference>
<dbReference type="PDB" id="4KFW">
    <property type="method" value="X-ray"/>
    <property type="resolution" value="2.70 A"/>
    <property type="chains" value="A/B=1-215"/>
</dbReference>
<dbReference type="PDBsum" id="4KFW"/>
<dbReference type="SMR" id="Q9R064"/>
<dbReference type="CORUM" id="Q9R064"/>
<dbReference type="FunCoup" id="Q9R064">
    <property type="interactions" value="3460"/>
</dbReference>
<dbReference type="IntAct" id="Q9R064">
    <property type="interactions" value="17"/>
</dbReference>
<dbReference type="MINT" id="Q9R064"/>
<dbReference type="STRING" id="10116.ENSRNOP00000072730"/>
<dbReference type="GlyGen" id="Q9R064">
    <property type="glycosylation" value="1 site, 1 O-linked glycan (1 site)"/>
</dbReference>
<dbReference type="iPTMnet" id="Q9R064"/>
<dbReference type="PhosphoSitePlus" id="Q9R064"/>
<dbReference type="jPOST" id="Q9R064"/>
<dbReference type="PaxDb" id="10116-ENSRNOP00000036881"/>
<dbReference type="UCSC" id="RGD:619911">
    <property type="organism name" value="rat"/>
</dbReference>
<dbReference type="AGR" id="RGD:619911"/>
<dbReference type="RGD" id="619911">
    <property type="gene designation" value="Gorasp2"/>
</dbReference>
<dbReference type="eggNOG" id="KOG3834">
    <property type="taxonomic scope" value="Eukaryota"/>
</dbReference>
<dbReference type="InParanoid" id="Q9R064"/>
<dbReference type="PhylomeDB" id="Q9R064"/>
<dbReference type="Reactome" id="R-RNO-162658">
    <property type="pathway name" value="Golgi Cisternae Pericentriolar Stack Reorganization"/>
</dbReference>
<dbReference type="EvolutionaryTrace" id="Q9R064"/>
<dbReference type="PRO" id="PR:Q9R064"/>
<dbReference type="Proteomes" id="UP000002494">
    <property type="component" value="Unplaced"/>
</dbReference>
<dbReference type="GO" id="GO:0005789">
    <property type="term" value="C:endoplasmic reticulum membrane"/>
    <property type="evidence" value="ECO:0000250"/>
    <property type="project" value="UniProtKB"/>
</dbReference>
<dbReference type="GO" id="GO:0005794">
    <property type="term" value="C:Golgi apparatus"/>
    <property type="evidence" value="ECO:0000314"/>
    <property type="project" value="MGI"/>
</dbReference>
<dbReference type="GO" id="GO:0005797">
    <property type="term" value="C:Golgi medial cisterna"/>
    <property type="evidence" value="ECO:0000314"/>
    <property type="project" value="RGD"/>
</dbReference>
<dbReference type="GO" id="GO:0000139">
    <property type="term" value="C:Golgi membrane"/>
    <property type="evidence" value="ECO:0000250"/>
    <property type="project" value="UniProtKB"/>
</dbReference>
<dbReference type="GO" id="GO:0030154">
    <property type="term" value="P:cell differentiation"/>
    <property type="evidence" value="ECO:0007669"/>
    <property type="project" value="UniProtKB-KW"/>
</dbReference>
<dbReference type="GO" id="GO:0061951">
    <property type="term" value="P:establishment of protein localization to plasma membrane"/>
    <property type="evidence" value="ECO:0000250"/>
    <property type="project" value="UniProtKB"/>
</dbReference>
<dbReference type="GO" id="GO:0007030">
    <property type="term" value="P:Golgi organization"/>
    <property type="evidence" value="ECO:0000314"/>
    <property type="project" value="RGD"/>
</dbReference>
<dbReference type="GO" id="GO:0070925">
    <property type="term" value="P:organelle assembly"/>
    <property type="evidence" value="ECO:0000266"/>
    <property type="project" value="RGD"/>
</dbReference>
<dbReference type="GO" id="GO:0006996">
    <property type="term" value="P:organelle organization"/>
    <property type="evidence" value="ECO:0000250"/>
    <property type="project" value="UniProtKB"/>
</dbReference>
<dbReference type="GO" id="GO:0034976">
    <property type="term" value="P:response to endoplasmic reticulum stress"/>
    <property type="evidence" value="ECO:0000250"/>
    <property type="project" value="UniProtKB"/>
</dbReference>
<dbReference type="GO" id="GO:0007283">
    <property type="term" value="P:spermatogenesis"/>
    <property type="evidence" value="ECO:0007669"/>
    <property type="project" value="UniProtKB-KW"/>
</dbReference>
<dbReference type="FunFam" id="2.30.42.10:FF:000026">
    <property type="entry name" value="Golgi reassembly stacking protein 2"/>
    <property type="match status" value="1"/>
</dbReference>
<dbReference type="FunFam" id="2.30.42.10:FF:000056">
    <property type="entry name" value="Golgi reassembly-stacking protein 2 isoform 1"/>
    <property type="match status" value="1"/>
</dbReference>
<dbReference type="Gene3D" id="2.30.42.10">
    <property type="match status" value="2"/>
</dbReference>
<dbReference type="InterPro" id="IPR007583">
    <property type="entry name" value="GRASP55_65"/>
</dbReference>
<dbReference type="InterPro" id="IPR024958">
    <property type="entry name" value="GRASP_PDZ"/>
</dbReference>
<dbReference type="InterPro" id="IPR036034">
    <property type="entry name" value="PDZ_sf"/>
</dbReference>
<dbReference type="PANTHER" id="PTHR12893">
    <property type="entry name" value="GOLGI REASSEMBLY STACKING PROTEIN GRASP"/>
    <property type="match status" value="1"/>
</dbReference>
<dbReference type="PANTHER" id="PTHR12893:SF1">
    <property type="entry name" value="GOLGI REASSEMBLY-STACKING PROTEIN 2"/>
    <property type="match status" value="1"/>
</dbReference>
<dbReference type="Pfam" id="PF04495">
    <property type="entry name" value="GRASP55_65"/>
    <property type="match status" value="1"/>
</dbReference>
<dbReference type="SUPFAM" id="SSF50156">
    <property type="entry name" value="PDZ domain-like"/>
    <property type="match status" value="2"/>
</dbReference>
<dbReference type="PROSITE" id="PS51865">
    <property type="entry name" value="PDZ_GRASP"/>
    <property type="match status" value="2"/>
</dbReference>
<feature type="initiator methionine" description="Removed" evidence="3">
    <location>
        <position position="1"/>
    </location>
</feature>
<feature type="chain" id="PRO_0000087547" description="Golgi reassembly-stacking protein 2">
    <location>
        <begin position="2"/>
        <end position="454"/>
    </location>
</feature>
<feature type="domain" description="PDZ GRASP-type 1" evidence="4">
    <location>
        <begin position="15"/>
        <end position="105"/>
    </location>
</feature>
<feature type="domain" description="PDZ GRASP-type 2" evidence="4">
    <location>
        <begin position="111"/>
        <end position="199"/>
    </location>
</feature>
<feature type="region of interest" description="GRASP" evidence="5">
    <location>
        <begin position="15"/>
        <end position="215"/>
    </location>
</feature>
<feature type="region of interest" description="Important for membrane binding" evidence="1">
    <location>
        <begin position="194"/>
        <end position="199"/>
    </location>
</feature>
<feature type="region of interest" description="Disordered" evidence="6">
    <location>
        <begin position="377"/>
        <end position="454"/>
    </location>
</feature>
<feature type="modified residue" description="Dimethylated arginine" evidence="10">
    <location>
        <position position="30"/>
    </location>
</feature>
<feature type="modified residue" description="Dimethylated arginine" evidence="10">
    <location>
        <position position="47"/>
    </location>
</feature>
<feature type="modified residue" description="Phosphoserine" evidence="3">
    <location>
        <position position="214"/>
    </location>
</feature>
<feature type="modified residue" description="Phosphothreonine" evidence="3">
    <location>
        <position position="222"/>
    </location>
</feature>
<feature type="modified residue" description="Phosphothreonine; by MAPK" evidence="3">
    <location>
        <position position="225"/>
    </location>
</feature>
<feature type="modified residue" description="Phosphoserine" evidence="2">
    <location>
        <position position="411"/>
    </location>
</feature>
<feature type="modified residue" description="Phosphothreonine" evidence="3">
    <location>
        <position position="435"/>
    </location>
</feature>
<feature type="modified residue" description="Phosphoserine" evidence="2">
    <location>
        <position position="443"/>
    </location>
</feature>
<feature type="modified residue" description="Phosphoserine" evidence="3">
    <location>
        <position position="451"/>
    </location>
</feature>
<feature type="lipid moiety-binding region" description="N-myristoyl glycine" evidence="3">
    <location>
        <position position="2"/>
    </location>
</feature>
<feature type="mutagenesis site" description="No or few Golgi targeting, accumulates in the cytoplasm." evidence="7">
    <original>G</original>
    <variation>A</variation>
    <location>
        <position position="2"/>
    </location>
</feature>
<feature type="strand" evidence="14">
    <location>
        <begin position="14"/>
        <end position="22"/>
    </location>
</feature>
<feature type="helix" evidence="14">
    <location>
        <begin position="27"/>
        <end position="30"/>
    </location>
</feature>
<feature type="turn" evidence="14">
    <location>
        <begin position="35"/>
        <end position="37"/>
    </location>
</feature>
<feature type="strand" evidence="14">
    <location>
        <begin position="38"/>
        <end position="43"/>
    </location>
</feature>
<feature type="strand" evidence="14">
    <location>
        <begin position="50"/>
        <end position="53"/>
    </location>
</feature>
<feature type="helix" evidence="14">
    <location>
        <begin position="54"/>
        <end position="61"/>
    </location>
</feature>
<feature type="turn" evidence="14">
    <location>
        <begin position="62"/>
        <end position="64"/>
    </location>
</feature>
<feature type="strand" evidence="14">
    <location>
        <begin position="67"/>
        <end position="73"/>
    </location>
</feature>
<feature type="turn" evidence="14">
    <location>
        <begin position="74"/>
        <end position="76"/>
    </location>
</feature>
<feature type="strand" evidence="14">
    <location>
        <begin position="79"/>
        <end position="84"/>
    </location>
</feature>
<feature type="strand" evidence="14">
    <location>
        <begin position="88"/>
        <end position="96"/>
    </location>
</feature>
<feature type="strand" evidence="14">
    <location>
        <begin position="98"/>
        <end position="104"/>
    </location>
</feature>
<feature type="turn" evidence="14">
    <location>
        <begin position="106"/>
        <end position="110"/>
    </location>
</feature>
<feature type="strand" evidence="14">
    <location>
        <begin position="113"/>
        <end position="118"/>
    </location>
</feature>
<feature type="helix" evidence="14">
    <location>
        <begin position="123"/>
        <end position="127"/>
    </location>
</feature>
<feature type="turn" evidence="14">
    <location>
        <begin position="131"/>
        <end position="133"/>
    </location>
</feature>
<feature type="strand" evidence="14">
    <location>
        <begin position="134"/>
        <end position="140"/>
    </location>
</feature>
<feature type="helix" evidence="14">
    <location>
        <begin position="149"/>
        <end position="155"/>
    </location>
</feature>
<feature type="turn" evidence="14">
    <location>
        <begin position="156"/>
        <end position="158"/>
    </location>
</feature>
<feature type="strand" evidence="14">
    <location>
        <begin position="161"/>
        <end position="167"/>
    </location>
</feature>
<feature type="turn" evidence="14">
    <location>
        <begin position="168"/>
        <end position="171"/>
    </location>
</feature>
<feature type="strand" evidence="14">
    <location>
        <begin position="172"/>
        <end position="178"/>
    </location>
</feature>
<feature type="strand" evidence="14">
    <location>
        <begin position="184"/>
        <end position="197"/>
    </location>
</feature>
<feature type="strand" evidence="14">
    <location>
        <begin position="207"/>
        <end position="210"/>
    </location>
</feature>
<reference key="1">
    <citation type="journal article" date="1999" name="EMBO J.">
        <title>GRASP55, a second mammalian GRASP protein involved in the stacking of Golgi cisternae in a cell-free system.</title>
        <authorList>
            <person name="Shorter J."/>
            <person name="Watson R."/>
            <person name="Giannakou M.-E."/>
            <person name="Clarke M."/>
            <person name="Warren G."/>
            <person name="Barr F.A."/>
        </authorList>
    </citation>
    <scope>NUCLEOTIDE SEQUENCE [MRNA]</scope>
    <scope>FUNCTION</scope>
    <scope>MUTAGENESIS OF GLY-2</scope>
    <scope>TISSUE SPECIFICITY</scope>
    <scope>SUBCELLULAR LOCATION</scope>
    <source>
        <strain>Sprague-Dawley</strain>
        <tissue>Testis</tissue>
    </source>
</reference>
<reference key="2">
    <citation type="journal article" date="2001" name="J. Cell Biol.">
        <title>A GRASP55-rab2 effector complex linking Golgi structure to membrane traffic.</title>
        <authorList>
            <person name="Short B."/>
            <person name="Preisinger C."/>
            <person name="Koerner R."/>
            <person name="Kopajtich R."/>
            <person name="Byron O."/>
            <person name="Barr F.A."/>
        </authorList>
    </citation>
    <scope>SUBCELLULAR LOCATION</scope>
    <scope>INTERACTION WITH BLZF1</scope>
</reference>
<reference key="3">
    <citation type="journal article" date="2001" name="J. Cell Biol.">
        <title>Golgi matrix proteins interact with p24 cargo receptors and aid their efficient retention in the Golgi apparatus.</title>
        <authorList>
            <person name="Barr F.A."/>
            <person name="Preisinger C."/>
            <person name="Kopajtich R."/>
            <person name="Koerner R."/>
        </authorList>
    </citation>
    <scope>INTERACTION WITH TMED2 AND TMED3</scope>
</reference>
<reference key="4">
    <citation type="journal article" date="2004" name="Mol. Biol. Cell">
        <title>Organellar proteomics reveals Golgi arginine dimethylation.</title>
        <authorList>
            <person name="Wu C.C."/>
            <person name="MacCoss M.J."/>
            <person name="Mardones G."/>
            <person name="Finnigan C."/>
            <person name="Mogelsvang S."/>
            <person name="Yates J.R. III"/>
            <person name="Howell K.E."/>
        </authorList>
    </citation>
    <scope>METHYLATION AT ARG-30 AND ARG-47</scope>
    <scope>IDENTIFICATION BY MASS SPECTROMETRY</scope>
</reference>
<reference evidence="13" key="5">
    <citation type="journal article" date="2013" name="J. Biol. Chem.">
        <title>Structural insight into Golgi membrane stacking by GRASP65 and GRASP55 proteins.</title>
        <authorList>
            <person name="Feng Y."/>
            <person name="Yu W."/>
            <person name="Li X."/>
            <person name="Lin S."/>
            <person name="Zhou Y."/>
            <person name="Hu J."/>
            <person name="Liu X."/>
        </authorList>
    </citation>
    <scope>X-RAY CRYSTALLOGRAPHY (2.70 ANGSTROMS) OF 1-215</scope>
    <scope>FUNCTION</scope>
</reference>
<accession>Q9R064</accession>
<sequence length="454" mass="47221">MGSSQSVEIPGGGTEGYHVLRVQENSPGHRAGLEPFFDFIVSISGSRLNKDNDTLKDLLKANVEKPVKMLIYSSKTLELREASVTPSNLWGGQGLLGVSIRFCSFDGANENVWHVLEVESNSPAALAGLRPHSDYIIGADTVMNESEDLFSLIETHEAKPLKLYVYNTDTDNCREVIITPNSAWGGEGSLGCGIGYGYLHRIPTRPFEEGKKISLPGQMTGTPITPLKDGFTQVQLSSVSPPSLSPPGTAGVEQSLSGLSISSAPPAVSNVLSTGVPTVPLLPPQVNQSLASVPPMNPAATLPSLMPLSAGLPNLPNLPSLSNFNLPAPHIMPGVGLPELGKPGLPPLPSLPPRNVPGIAPLPMPSDFLPSFPLVPEGSSAASAGEPLSSLPAMGPPSDPVMTTAKADTSSLTVDVMSPASKVPTTVEDRVSDCTPAMEKPVSAVTDANASGAS</sequence>
<comment type="function">
    <text evidence="2 3 7 11">Key structural protein of the Golgi apparatus (By similarity). The membrane cisternae of the Golgi apparatus adhere to each other to form stacks, which are aligned side by side to form the Golgi ribbon (By similarity). Acting in concert with GORASP1/GRASP65, is required for the formation and maintenance of the Golgi ribbon, and may be dispensable for the formation of stacks (By similarity). However, other studies suggest that GORASP2 plays a role in the assembly and membrane stacking of the Golgi cisternae, and in the process by which Golgi stacks reform after breakdown during mitosis and meiosis (PubMed:10487747, PubMed:23940043). May regulate the intracellular transport and presentation of a defined set of transmembrane proteins, such as transmembrane TGFA (By similarity). Required for normal acrosome formation during spermiogenesis and normal male fertility, probably by promoting colocalization of JAM2 and JAM3 at contact sites between germ cells and Sertoli cells (By similarity). Mediates ER stress-induced unconventional (ER/Golgi-independent) trafficking of core-glycosylated CFTR to cell membrane (By similarity).</text>
</comment>
<comment type="subunit">
    <text evidence="2 3 8 9">Homodimer. Homooligomer. ER stress induces phosphorylation-dependent monomerization (By similarity). Interacts with BLZF1/Golgin 45 (PubMed:11739401). Identified in a complex with RAB2 and GORASP2 (By similarity). Interacts with JAM2 and JAM3 (By similarity). Interacts with members of the p24 cargo receptors. Interacts with CNIH1 and the cytoplasmic domain of transmembrane TGFA, prior its transit in the trans-Golgi. Interacts with KCTD5 (By similarity). Interacts with TMED2 and TMED3 (PubMed:11739402). Interacts with SEC16A in response to ER stress (By similarity). Interacts (via PDZ GRASP-type 1 domain) with core-glycosylated CFTR in response to ER stress (By similarity).</text>
</comment>
<comment type="interaction">
    <interactant intactId="EBI-4422912">
        <id>Q9R064</id>
    </interactant>
    <interactant intactId="EBI-4422894">
        <id>Q6AYB8</id>
        <label>Blzf1</label>
    </interactant>
    <organismsDiffer>false</organismsDiffer>
    <experiments>5</experiments>
</comment>
<comment type="interaction">
    <interactant intactId="EBI-4422912">
        <id>Q9R064</id>
    </interactant>
    <interactant intactId="EBI-918648">
        <id>Q63584</id>
        <label>Tmed10</label>
    </interactant>
    <organismsDiffer>false</organismsDiffer>
    <experiments>2</experiments>
</comment>
<comment type="interaction">
    <interactant intactId="EBI-4422912">
        <id>Q9R064</id>
    </interactant>
    <interactant intactId="EBI-918600">
        <id>Q63524</id>
        <label>Tmed2</label>
    </interactant>
    <organismsDiffer>false</organismsDiffer>
    <experiments>4</experiments>
</comment>
<comment type="interaction">
    <interactant intactId="EBI-4422912">
        <id>Q9R064</id>
    </interactant>
    <interactant intactId="EBI-920903">
        <id>Q5I0E7</id>
        <label>Tmed9</label>
    </interactant>
    <organismsDiffer>false</organismsDiffer>
    <experiments>3</experiments>
</comment>
<comment type="interaction">
    <interactant intactId="EBI-4422912">
        <id>Q9R064</id>
    </interactant>
    <interactant intactId="EBI-992788">
        <id>P50281</id>
        <label>MMP14</label>
    </interactant>
    <organismsDiffer>true</organismsDiffer>
    <experiments>14</experiments>
</comment>
<comment type="subcellular location">
    <subcellularLocation>
        <location evidence="7 8">Golgi apparatus membrane</location>
        <topology evidence="7">Lipid-anchor</topology>
    </subcellularLocation>
    <subcellularLocation>
        <location evidence="3">Endoplasmic reticulum membrane</location>
    </subcellularLocation>
    <subcellularLocation>
        <location evidence="3">Golgi apparatus</location>
    </subcellularLocation>
    <text evidence="3 7">Detected in the intermediate Golgi, membrane-associated (PubMed:10487747). ER stress triggers its relocalization from Golgi to ER membrane (By similarity).</text>
</comment>
<comment type="tissue specificity">
    <text evidence="7">Detected in lung, brain, heart, liver and testis.</text>
</comment>
<comment type="PTM">
    <text evidence="3 7">Myristoylated (By similarity). Myristoylation is essential for the Golgi targeting (PubMed:10487747).</text>
</comment>
<comment type="PTM">
    <text evidence="3">Palmitoylated.</text>
</comment>
<comment type="PTM">
    <text evidence="3">Phosphorylated in mitotic cells. ER stress-induced phosphorylation at Ser-443 induces monomerization and subsequent relocalization from Golgi to ER which is essential for mediating unconventional (ER/Golgi-independent) trafficking of CFTR to the cell membrane.</text>
</comment>
<comment type="similarity">
    <text evidence="12">Belongs to the GORASP family.</text>
</comment>
<gene>
    <name type="primary">Gorasp2</name>
</gene>
<organism>
    <name type="scientific">Rattus norvegicus</name>
    <name type="common">Rat</name>
    <dbReference type="NCBI Taxonomy" id="10116"/>
    <lineage>
        <taxon>Eukaryota</taxon>
        <taxon>Metazoa</taxon>
        <taxon>Chordata</taxon>
        <taxon>Craniata</taxon>
        <taxon>Vertebrata</taxon>
        <taxon>Euteleostomi</taxon>
        <taxon>Mammalia</taxon>
        <taxon>Eutheria</taxon>
        <taxon>Euarchontoglires</taxon>
        <taxon>Glires</taxon>
        <taxon>Rodentia</taxon>
        <taxon>Myomorpha</taxon>
        <taxon>Muroidea</taxon>
        <taxon>Muridae</taxon>
        <taxon>Murinae</taxon>
        <taxon>Rattus</taxon>
    </lineage>
</organism>